<protein>
    <recommendedName>
        <fullName evidence="1">UPF0178 protein RPC_3085</fullName>
    </recommendedName>
</protein>
<sequence length="155" mass="16360">MSPTRIYVDADACPVKDEIYKVAARHGLPVSVVAGNFIRVPADPSIERIAAGPGMDAADDWIAERAGPGDIVVTSDVPLASRCVKRGAEVLAPNGKPFSEASIGMTLAVRNLMTDLRSAGEVTGGPRGFSPRDRSAFLSALDTAIRRIQRSNKTA</sequence>
<organism>
    <name type="scientific">Rhodopseudomonas palustris (strain BisB18)</name>
    <dbReference type="NCBI Taxonomy" id="316056"/>
    <lineage>
        <taxon>Bacteria</taxon>
        <taxon>Pseudomonadati</taxon>
        <taxon>Pseudomonadota</taxon>
        <taxon>Alphaproteobacteria</taxon>
        <taxon>Hyphomicrobiales</taxon>
        <taxon>Nitrobacteraceae</taxon>
        <taxon>Rhodopseudomonas</taxon>
    </lineage>
</organism>
<gene>
    <name type="ordered locus">RPC_3085</name>
</gene>
<reference key="1">
    <citation type="submission" date="2006-03" db="EMBL/GenBank/DDBJ databases">
        <title>Complete sequence of Rhodopseudomonas palustris BisB18.</title>
        <authorList>
            <consortium name="US DOE Joint Genome Institute"/>
            <person name="Copeland A."/>
            <person name="Lucas S."/>
            <person name="Lapidus A."/>
            <person name="Barry K."/>
            <person name="Detter J.C."/>
            <person name="Glavina del Rio T."/>
            <person name="Hammon N."/>
            <person name="Israni S."/>
            <person name="Dalin E."/>
            <person name="Tice H."/>
            <person name="Pitluck S."/>
            <person name="Chain P."/>
            <person name="Malfatti S."/>
            <person name="Shin M."/>
            <person name="Vergez L."/>
            <person name="Schmutz J."/>
            <person name="Larimer F."/>
            <person name="Land M."/>
            <person name="Hauser L."/>
            <person name="Pelletier D.A."/>
            <person name="Kyrpides N."/>
            <person name="Anderson I."/>
            <person name="Oda Y."/>
            <person name="Harwood C.S."/>
            <person name="Richardson P."/>
        </authorList>
    </citation>
    <scope>NUCLEOTIDE SEQUENCE [LARGE SCALE GENOMIC DNA]</scope>
    <source>
        <strain>BisB18</strain>
    </source>
</reference>
<proteinExistence type="inferred from homology"/>
<dbReference type="EMBL" id="CP000301">
    <property type="protein sequence ID" value="ABD88627.1"/>
    <property type="molecule type" value="Genomic_DNA"/>
</dbReference>
<dbReference type="SMR" id="Q212Q9"/>
<dbReference type="STRING" id="316056.RPC_3085"/>
<dbReference type="KEGG" id="rpc:RPC_3085"/>
<dbReference type="eggNOG" id="COG1671">
    <property type="taxonomic scope" value="Bacteria"/>
</dbReference>
<dbReference type="HOGENOM" id="CLU_106619_2_1_5"/>
<dbReference type="OrthoDB" id="9798918at2"/>
<dbReference type="CDD" id="cd18720">
    <property type="entry name" value="PIN_YqxD-like"/>
    <property type="match status" value="1"/>
</dbReference>
<dbReference type="HAMAP" id="MF_00489">
    <property type="entry name" value="UPF0178"/>
    <property type="match status" value="1"/>
</dbReference>
<dbReference type="InterPro" id="IPR003791">
    <property type="entry name" value="UPF0178"/>
</dbReference>
<dbReference type="NCBIfam" id="NF001095">
    <property type="entry name" value="PRK00124.1"/>
    <property type="match status" value="1"/>
</dbReference>
<dbReference type="PANTHER" id="PTHR35146">
    <property type="entry name" value="UPF0178 PROTEIN YAII"/>
    <property type="match status" value="1"/>
</dbReference>
<dbReference type="PANTHER" id="PTHR35146:SF1">
    <property type="entry name" value="UPF0178 PROTEIN YAII"/>
    <property type="match status" value="1"/>
</dbReference>
<dbReference type="Pfam" id="PF02639">
    <property type="entry name" value="DUF188"/>
    <property type="match status" value="1"/>
</dbReference>
<comment type="similarity">
    <text evidence="1">Belongs to the UPF0178 family.</text>
</comment>
<name>Y3085_RHOPB</name>
<feature type="chain" id="PRO_0000241826" description="UPF0178 protein RPC_3085">
    <location>
        <begin position="1"/>
        <end position="155"/>
    </location>
</feature>
<evidence type="ECO:0000255" key="1">
    <source>
        <dbReference type="HAMAP-Rule" id="MF_00489"/>
    </source>
</evidence>
<accession>Q212Q9</accession>